<feature type="transit peptide" description="Mitochondrion" evidence="3">
    <location>
        <begin position="1"/>
        <end status="unknown"/>
    </location>
</feature>
<feature type="chain" id="PRO_0000001726" description="Alternative oxidase, mitochondrial">
    <location>
        <begin status="unknown"/>
        <end position="357"/>
    </location>
</feature>
<feature type="transmembrane region" description="Helical" evidence="3">
    <location>
        <begin position="152"/>
        <end position="172"/>
    </location>
</feature>
<feature type="transmembrane region" description="Helical" evidence="3">
    <location>
        <begin position="218"/>
        <end position="238"/>
    </location>
</feature>
<feature type="region of interest" description="Disordered" evidence="4">
    <location>
        <begin position="330"/>
        <end position="357"/>
    </location>
</feature>
<feature type="compositionally biased region" description="Basic and acidic residues" evidence="4">
    <location>
        <begin position="348"/>
        <end position="357"/>
    </location>
</feature>
<feature type="binding site" evidence="2">
    <location>
        <position position="159"/>
    </location>
    <ligand>
        <name>Fe cation</name>
        <dbReference type="ChEBI" id="CHEBI:24875"/>
        <label>1</label>
    </ligand>
</feature>
<feature type="binding site" evidence="2">
    <location>
        <position position="198"/>
    </location>
    <ligand>
        <name>Fe cation</name>
        <dbReference type="ChEBI" id="CHEBI:24875"/>
        <label>1</label>
    </ligand>
</feature>
<feature type="binding site" evidence="2">
    <location>
        <position position="198"/>
    </location>
    <ligand>
        <name>Fe cation</name>
        <dbReference type="ChEBI" id="CHEBI:24875"/>
        <label>2</label>
    </ligand>
</feature>
<feature type="binding site" evidence="2">
    <location>
        <position position="201"/>
    </location>
    <ligand>
        <name>Fe cation</name>
        <dbReference type="ChEBI" id="CHEBI:24875"/>
        <label>1</label>
    </ligand>
</feature>
<feature type="binding site" evidence="2">
    <location>
        <position position="249"/>
    </location>
    <ligand>
        <name>Fe cation</name>
        <dbReference type="ChEBI" id="CHEBI:24875"/>
        <label>2</label>
    </ligand>
</feature>
<feature type="binding site" evidence="2">
    <location>
        <position position="304"/>
    </location>
    <ligand>
        <name>Fe cation</name>
        <dbReference type="ChEBI" id="CHEBI:24875"/>
        <label>1</label>
    </ligand>
</feature>
<feature type="binding site" evidence="2">
    <location>
        <position position="304"/>
    </location>
    <ligand>
        <name>Fe cation</name>
        <dbReference type="ChEBI" id="CHEBI:24875"/>
        <label>2</label>
    </ligand>
</feature>
<feature type="binding site" evidence="2">
    <location>
        <position position="307"/>
    </location>
    <ligand>
        <name>Fe cation</name>
        <dbReference type="ChEBI" id="CHEBI:24875"/>
        <label>2</label>
    </ligand>
</feature>
<comment type="function">
    <text evidence="1">Catalyzes cyanide-resistant oxygen consumption. May increase respiration when the cytochrome respiratory pathway is restricted, or in response to low temperatures (By similarity).</text>
</comment>
<comment type="cofactor">
    <cofactor evidence="2">
        <name>Fe cation</name>
        <dbReference type="ChEBI" id="CHEBI:24875"/>
    </cofactor>
    <text evidence="2">Binds 2 iron ions per subunit.</text>
</comment>
<comment type="subcellular location">
    <subcellularLocation>
        <location evidence="1">Mitochondrion inner membrane</location>
        <topology evidence="1">Multi-pass membrane protein</topology>
        <orientation evidence="1">Matrix side</orientation>
    </subcellularLocation>
</comment>
<comment type="similarity">
    <text evidence="5">Belongs to the alternative oxidase family.</text>
</comment>
<proteinExistence type="inferred from homology"/>
<accession>Q9P414</accession>
<accession>A3LRV0</accession>
<evidence type="ECO:0000250" key="1"/>
<evidence type="ECO:0000250" key="2">
    <source>
        <dbReference type="UniProtKB" id="Q26710"/>
    </source>
</evidence>
<evidence type="ECO:0000255" key="3"/>
<evidence type="ECO:0000256" key="4">
    <source>
        <dbReference type="SAM" id="MobiDB-lite"/>
    </source>
</evidence>
<evidence type="ECO:0000305" key="5"/>
<dbReference type="EC" id="1.-.-.-"/>
<dbReference type="EMBL" id="AY004212">
    <property type="protein sequence ID" value="AAF97475.2"/>
    <property type="molecule type" value="Genomic_DNA"/>
</dbReference>
<dbReference type="EMBL" id="CP000497">
    <property type="protein sequence ID" value="ABN65454.2"/>
    <property type="molecule type" value="Genomic_DNA"/>
</dbReference>
<dbReference type="RefSeq" id="XP_001383483.2">
    <property type="nucleotide sequence ID" value="XM_001383446.1"/>
</dbReference>
<dbReference type="SMR" id="Q9P414"/>
<dbReference type="STRING" id="322104.Q9P414"/>
<dbReference type="GeneID" id="4837885"/>
<dbReference type="KEGG" id="pic:PICST_67332"/>
<dbReference type="eggNOG" id="ENOG502QSB5">
    <property type="taxonomic scope" value="Eukaryota"/>
</dbReference>
<dbReference type="HOGENOM" id="CLU_041974_3_0_1"/>
<dbReference type="InParanoid" id="Q9P414"/>
<dbReference type="OMA" id="VHTYTRA"/>
<dbReference type="OrthoDB" id="16906at2759"/>
<dbReference type="Proteomes" id="UP000002258">
    <property type="component" value="Chromosome 3"/>
</dbReference>
<dbReference type="GO" id="GO:0005743">
    <property type="term" value="C:mitochondrial inner membrane"/>
    <property type="evidence" value="ECO:0007669"/>
    <property type="project" value="UniProtKB-SubCell"/>
</dbReference>
<dbReference type="GO" id="GO:0009916">
    <property type="term" value="F:alternative oxidase activity"/>
    <property type="evidence" value="ECO:0007669"/>
    <property type="project" value="InterPro"/>
</dbReference>
<dbReference type="GO" id="GO:0046872">
    <property type="term" value="F:metal ion binding"/>
    <property type="evidence" value="ECO:0007669"/>
    <property type="project" value="UniProtKB-KW"/>
</dbReference>
<dbReference type="GO" id="GO:0010230">
    <property type="term" value="P:alternative respiration"/>
    <property type="evidence" value="ECO:0007669"/>
    <property type="project" value="TreeGrafter"/>
</dbReference>
<dbReference type="CDD" id="cd01053">
    <property type="entry name" value="AOX"/>
    <property type="match status" value="1"/>
</dbReference>
<dbReference type="FunFam" id="1.20.1260.140:FF:000002">
    <property type="entry name" value="Alternative oxidase"/>
    <property type="match status" value="1"/>
</dbReference>
<dbReference type="Gene3D" id="1.20.1260.140">
    <property type="entry name" value="Alternative oxidase"/>
    <property type="match status" value="1"/>
</dbReference>
<dbReference type="InterPro" id="IPR002680">
    <property type="entry name" value="AOX"/>
</dbReference>
<dbReference type="InterPro" id="IPR038659">
    <property type="entry name" value="AOX_sf"/>
</dbReference>
<dbReference type="PANTHER" id="PTHR31803">
    <property type="entry name" value="ALTERNATIVE OXIDASE"/>
    <property type="match status" value="1"/>
</dbReference>
<dbReference type="PANTHER" id="PTHR31803:SF3">
    <property type="entry name" value="ALTERNATIVE OXIDASE"/>
    <property type="match status" value="1"/>
</dbReference>
<dbReference type="Pfam" id="PF01786">
    <property type="entry name" value="AOX"/>
    <property type="match status" value="1"/>
</dbReference>
<dbReference type="PIRSF" id="PIRSF005229">
    <property type="entry name" value="AOX"/>
    <property type="match status" value="1"/>
</dbReference>
<name>AOX_PICST</name>
<reference key="1">
    <citation type="journal article" date="2002" name="Yeast">
        <title>SHAM-sensitive alternative respiration in the xylose-metabolizing yeast Pichia stipitis.</title>
        <authorList>
            <person name="Shi N.-Q."/>
            <person name="Cruz J."/>
            <person name="Sherman F."/>
            <person name="Jeffries T.W."/>
        </authorList>
    </citation>
    <scope>NUCLEOTIDE SEQUENCE [GENOMIC DNA]</scope>
    <source>
        <strain>ATCC 58785 / CBS 6054 / NBRC 10063 / NRRL Y-11545</strain>
    </source>
</reference>
<reference key="2">
    <citation type="journal article" date="2007" name="Nat. Biotechnol.">
        <title>Genome sequence of the lignocellulose-bioconverting and xylose-fermenting yeast Pichia stipitis.</title>
        <authorList>
            <person name="Jeffries T.W."/>
            <person name="Grigoriev I.V."/>
            <person name="Grimwood J."/>
            <person name="Laplaza J.M."/>
            <person name="Aerts A."/>
            <person name="Salamov A."/>
            <person name="Schmutz J."/>
            <person name="Lindquist E."/>
            <person name="Dehal P."/>
            <person name="Shapiro H."/>
            <person name="Jin Y.-S."/>
            <person name="Passoth V."/>
            <person name="Richardson P.M."/>
        </authorList>
    </citation>
    <scope>NUCLEOTIDE SEQUENCE [LARGE SCALE GENOMIC DNA]</scope>
    <source>
        <strain>ATCC 58785 / CBS 6054 / NBRC 10063 / NRRL Y-11545</strain>
    </source>
</reference>
<organism>
    <name type="scientific">Scheffersomyces stipitis (strain ATCC 58785 / CBS 6054 / NBRC 10063 / NRRL Y-11545)</name>
    <name type="common">Yeast</name>
    <name type="synonym">Pichia stipitis</name>
    <dbReference type="NCBI Taxonomy" id="322104"/>
    <lineage>
        <taxon>Eukaryota</taxon>
        <taxon>Fungi</taxon>
        <taxon>Dikarya</taxon>
        <taxon>Ascomycota</taxon>
        <taxon>Saccharomycotina</taxon>
        <taxon>Pichiomycetes</taxon>
        <taxon>Debaryomycetaceae</taxon>
        <taxon>Scheffersomyces</taxon>
    </lineage>
</organism>
<protein>
    <recommendedName>
        <fullName>Alternative oxidase, mitochondrial</fullName>
        <ecNumber>1.-.-.-</ecNumber>
    </recommendedName>
    <alternativeName>
        <fullName>SHAM-sensitive terminal oxidase</fullName>
    </alternativeName>
</protein>
<gene>
    <name type="primary">STO1</name>
    <name type="synonym">AOX1</name>
    <name type="ORF">PICST_67332</name>
</gene>
<keyword id="KW-0249">Electron transport</keyword>
<keyword id="KW-0408">Iron</keyword>
<keyword id="KW-0472">Membrane</keyword>
<keyword id="KW-0479">Metal-binding</keyword>
<keyword id="KW-0496">Mitochondrion</keyword>
<keyword id="KW-0999">Mitochondrion inner membrane</keyword>
<keyword id="KW-0560">Oxidoreductase</keyword>
<keyword id="KW-1185">Reference proteome</keyword>
<keyword id="KW-0679">Respiratory chain</keyword>
<keyword id="KW-0809">Transit peptide</keyword>
<keyword id="KW-0812">Transmembrane</keyword>
<keyword id="KW-1133">Transmembrane helix</keyword>
<keyword id="KW-0813">Transport</keyword>
<sequence>MLSVQTTRAAKLQLGQLPSIAYTARSGRLHHQFYSTVAEKTANPTPNTSDKTNIFDIRTKVYDETDIRKHDDNQFITHPLFPHPTFSQEDCLKVGYEHRPPRTFGDKMAFRGIELVRGSFDFVTGYKKPKTQADIDSGFKGTRYEMTEGKWLTRCIFLESIAGVPGAVASFIRHLHSLRLLKRDKAWIETLLDEAFNERMHLLTFIKIGKPSWFTRTIIYVGQGVFCNLFFLFYLANPKYCHRFVGYLEEEAVSTYTHFVHELQSGKLPKFENIKIPTIAWQYWPELTENSSMLDLILRIRADEAKHREVNHTLANLDQRKDRNPFGLAIPDLKEPQPESGLKVTKPHGWEKEELKL</sequence>